<gene>
    <name evidence="1" type="primary">rpsJ</name>
    <name type="ordered locus">TWT_555</name>
</gene>
<keyword id="KW-1185">Reference proteome</keyword>
<keyword id="KW-0687">Ribonucleoprotein</keyword>
<keyword id="KW-0689">Ribosomal protein</keyword>
<organism>
    <name type="scientific">Tropheryma whipplei (strain Twist)</name>
    <name type="common">Whipple's bacillus</name>
    <dbReference type="NCBI Taxonomy" id="203267"/>
    <lineage>
        <taxon>Bacteria</taxon>
        <taxon>Bacillati</taxon>
        <taxon>Actinomycetota</taxon>
        <taxon>Actinomycetes</taxon>
        <taxon>Micrococcales</taxon>
        <taxon>Tropherymataceae</taxon>
        <taxon>Tropheryma</taxon>
    </lineage>
</organism>
<sequence>MEEQKIRIRLKSYSHEIIDVSAKKIVDTVTRAGATIVGPVPLPTKKSVVCVIRSPHRHKDSREHFEMRTHKRLINVVDLTPRAVDALMRLDLSSEVNVEIKL</sequence>
<dbReference type="EMBL" id="AE014184">
    <property type="protein sequence ID" value="AAO44652.1"/>
    <property type="molecule type" value="Genomic_DNA"/>
</dbReference>
<dbReference type="RefSeq" id="WP_011096164.1">
    <property type="nucleotide sequence ID" value="NC_004572.3"/>
</dbReference>
<dbReference type="SMR" id="Q83FY5"/>
<dbReference type="STRING" id="203267.TWT_555"/>
<dbReference type="GeneID" id="67387982"/>
<dbReference type="KEGG" id="twh:TWT_555"/>
<dbReference type="eggNOG" id="COG0051">
    <property type="taxonomic scope" value="Bacteria"/>
</dbReference>
<dbReference type="HOGENOM" id="CLU_122625_1_3_11"/>
<dbReference type="OrthoDB" id="9804464at2"/>
<dbReference type="Proteomes" id="UP000002200">
    <property type="component" value="Chromosome"/>
</dbReference>
<dbReference type="GO" id="GO:1990904">
    <property type="term" value="C:ribonucleoprotein complex"/>
    <property type="evidence" value="ECO:0007669"/>
    <property type="project" value="UniProtKB-KW"/>
</dbReference>
<dbReference type="GO" id="GO:0005840">
    <property type="term" value="C:ribosome"/>
    <property type="evidence" value="ECO:0007669"/>
    <property type="project" value="UniProtKB-KW"/>
</dbReference>
<dbReference type="GO" id="GO:0003735">
    <property type="term" value="F:structural constituent of ribosome"/>
    <property type="evidence" value="ECO:0007669"/>
    <property type="project" value="InterPro"/>
</dbReference>
<dbReference type="GO" id="GO:0000049">
    <property type="term" value="F:tRNA binding"/>
    <property type="evidence" value="ECO:0007669"/>
    <property type="project" value="UniProtKB-UniRule"/>
</dbReference>
<dbReference type="GO" id="GO:0006412">
    <property type="term" value="P:translation"/>
    <property type="evidence" value="ECO:0007669"/>
    <property type="project" value="UniProtKB-UniRule"/>
</dbReference>
<dbReference type="FunFam" id="3.30.70.600:FF:000003">
    <property type="entry name" value="30S ribosomal protein S10"/>
    <property type="match status" value="1"/>
</dbReference>
<dbReference type="Gene3D" id="3.30.70.600">
    <property type="entry name" value="Ribosomal protein S10 domain"/>
    <property type="match status" value="1"/>
</dbReference>
<dbReference type="HAMAP" id="MF_00508">
    <property type="entry name" value="Ribosomal_uS10"/>
    <property type="match status" value="1"/>
</dbReference>
<dbReference type="InterPro" id="IPR001848">
    <property type="entry name" value="Ribosomal_uS10"/>
</dbReference>
<dbReference type="InterPro" id="IPR018268">
    <property type="entry name" value="Ribosomal_uS10_CS"/>
</dbReference>
<dbReference type="InterPro" id="IPR027486">
    <property type="entry name" value="Ribosomal_uS10_dom"/>
</dbReference>
<dbReference type="InterPro" id="IPR036838">
    <property type="entry name" value="Ribosomal_uS10_dom_sf"/>
</dbReference>
<dbReference type="NCBIfam" id="NF001861">
    <property type="entry name" value="PRK00596.1"/>
    <property type="match status" value="1"/>
</dbReference>
<dbReference type="NCBIfam" id="TIGR01049">
    <property type="entry name" value="rpsJ_bact"/>
    <property type="match status" value="1"/>
</dbReference>
<dbReference type="PANTHER" id="PTHR11700">
    <property type="entry name" value="30S RIBOSOMAL PROTEIN S10 FAMILY MEMBER"/>
    <property type="match status" value="1"/>
</dbReference>
<dbReference type="Pfam" id="PF00338">
    <property type="entry name" value="Ribosomal_S10"/>
    <property type="match status" value="1"/>
</dbReference>
<dbReference type="PRINTS" id="PR00971">
    <property type="entry name" value="RIBOSOMALS10"/>
</dbReference>
<dbReference type="SMART" id="SM01403">
    <property type="entry name" value="Ribosomal_S10"/>
    <property type="match status" value="1"/>
</dbReference>
<dbReference type="SUPFAM" id="SSF54999">
    <property type="entry name" value="Ribosomal protein S10"/>
    <property type="match status" value="1"/>
</dbReference>
<dbReference type="PROSITE" id="PS00361">
    <property type="entry name" value="RIBOSOMAL_S10"/>
    <property type="match status" value="1"/>
</dbReference>
<protein>
    <recommendedName>
        <fullName evidence="1">Small ribosomal subunit protein uS10</fullName>
    </recommendedName>
    <alternativeName>
        <fullName evidence="2">30S ribosomal protein S10</fullName>
    </alternativeName>
</protein>
<feature type="chain" id="PRO_0000146627" description="Small ribosomal subunit protein uS10">
    <location>
        <begin position="1"/>
        <end position="102"/>
    </location>
</feature>
<accession>Q83FY5</accession>
<comment type="function">
    <text evidence="1">Involved in the binding of tRNA to the ribosomes.</text>
</comment>
<comment type="subunit">
    <text evidence="1">Part of the 30S ribosomal subunit.</text>
</comment>
<comment type="similarity">
    <text evidence="1">Belongs to the universal ribosomal protein uS10 family.</text>
</comment>
<evidence type="ECO:0000255" key="1">
    <source>
        <dbReference type="HAMAP-Rule" id="MF_00508"/>
    </source>
</evidence>
<evidence type="ECO:0000305" key="2"/>
<proteinExistence type="inferred from homology"/>
<name>RS10_TROWT</name>
<reference key="1">
    <citation type="journal article" date="2003" name="Genome Res.">
        <title>Tropheryma whipplei twist: a human pathogenic Actinobacteria with a reduced genome.</title>
        <authorList>
            <person name="Raoult D."/>
            <person name="Ogata H."/>
            <person name="Audic S."/>
            <person name="Robert C."/>
            <person name="Suhre K."/>
            <person name="Drancourt M."/>
            <person name="Claverie J.-M."/>
        </authorList>
    </citation>
    <scope>NUCLEOTIDE SEQUENCE [LARGE SCALE GENOMIC DNA]</scope>
    <source>
        <strain>Twist</strain>
    </source>
</reference>